<organism>
    <name type="scientific">Catharanthus roseus</name>
    <name type="common">Madagascar periwinkle</name>
    <name type="synonym">Vinca rosea</name>
    <dbReference type="NCBI Taxonomy" id="4058"/>
    <lineage>
        <taxon>Eukaryota</taxon>
        <taxon>Viridiplantae</taxon>
        <taxon>Streptophyta</taxon>
        <taxon>Embryophyta</taxon>
        <taxon>Tracheophyta</taxon>
        <taxon>Spermatophyta</taxon>
        <taxon>Magnoliopsida</taxon>
        <taxon>eudicotyledons</taxon>
        <taxon>Gunneridae</taxon>
        <taxon>Pentapetalae</taxon>
        <taxon>asterids</taxon>
        <taxon>lamiids</taxon>
        <taxon>Gentianales</taxon>
        <taxon>Apocynaceae</taxon>
        <taxon>Rauvolfioideae</taxon>
        <taxon>Vinceae</taxon>
        <taxon>Catharanthinae</taxon>
        <taxon>Catharanthus</taxon>
    </lineage>
</organism>
<proteinExistence type="evidence at protein level"/>
<gene>
    <name type="primary">SAMDC</name>
</gene>
<protein>
    <recommendedName>
        <fullName>S-adenosylmethionine decarboxylase proenzyme</fullName>
        <shortName>AdoMetDC</shortName>
        <shortName>SAMDC</shortName>
        <ecNumber>4.1.1.50</ecNumber>
    </recommendedName>
    <component>
        <recommendedName>
            <fullName>S-adenosylmethionine decarboxylase alpha chain</fullName>
        </recommendedName>
    </component>
    <component>
        <recommendedName>
            <fullName>S-adenosylmethionine decarboxylase beta chain</fullName>
        </recommendedName>
    </component>
</protein>
<evidence type="ECO:0000250" key="1"/>
<evidence type="ECO:0000269" key="2">
    <source>
    </source>
</evidence>
<evidence type="ECO:0000305" key="3"/>
<comment type="catalytic activity">
    <reaction>
        <text>S-adenosyl-L-methionine + H(+) = S-adenosyl 3-(methylsulfanyl)propylamine + CO2</text>
        <dbReference type="Rhea" id="RHEA:15981"/>
        <dbReference type="ChEBI" id="CHEBI:15378"/>
        <dbReference type="ChEBI" id="CHEBI:16526"/>
        <dbReference type="ChEBI" id="CHEBI:57443"/>
        <dbReference type="ChEBI" id="CHEBI:59789"/>
        <dbReference type="EC" id="4.1.1.50"/>
    </reaction>
</comment>
<comment type="cofactor">
    <cofactor>
        <name>pyruvate</name>
        <dbReference type="ChEBI" id="CHEBI:15361"/>
    </cofactor>
    <text>Binds 1 pyruvoyl group covalently per subunit.</text>
</comment>
<comment type="pathway">
    <text>Amine and polyamine biosynthesis; S-adenosylmethioninamine biosynthesis; S-adenosylmethioninamine from S-adenosyl-L-methionine: step 1/1.</text>
</comment>
<comment type="PTM">
    <text>Is synthesized initially as an inactive proenzyme. Formation of the active enzyme involves a self-maturation process in which the active site pyruvoyl group is generated from an internal serine residue via an autocatalytic post-translational modification. Two non-identical subunits are generated from the proenzyme in this reaction, and the pyruvate is formed at the N-terminus of the alpha chain, which is derived from the carboxyl end of the proenzyme. The post-translation cleavage follows an unusual pathway, termed non-hydrolytic serinolysis, in which the side chain hydroxyl group of the serine supplies its oxygen atom to form the C-terminus of the beta chain, while the remainder of the serine residue undergoes an oxidative deamination to produce ammonia and the pyruvoyl group blocking the N-terminus of the alpha chain.</text>
</comment>
<comment type="similarity">
    <text evidence="3">Belongs to the eukaryotic AdoMetDC family.</text>
</comment>
<sequence length="357" mass="39714">MALPASAIGFEGYEKRLEISFFESSFFADPDGKGLRALNKSQIDEILEPAECTIVDSLSNQYLDSYVLSESSLFVYPYKIIIKTCGTTKLLLSIPAILKLAESLSLSVRNVKYTRGSFIFPGAQSFPHRSFSEEVELLDNYFGKLGLESNAFIMGNPDQPQKWHVYSASVGSEQSSDPTYTLEMCMTGLDREKASVFYKSESSSAALMTTRSGIRKILPDSEICDFEFDPCGYSMNSIEEAAISTIHVTPEDGFSYASFEAAGYDLKAQNLGMMIERVLACFQPSEFSVAVHCDVTCKSLEQICSLELKEYSLDEKINEELGLGGSIIYKKFLRIDACGSPRSILKCCWKEDESEEE</sequence>
<accession>Q42679</accession>
<feature type="chain" id="PRO_0000029997" description="S-adenosylmethionine decarboxylase beta chain">
    <location>
        <begin position="1"/>
        <end position="70"/>
    </location>
</feature>
<feature type="chain" id="PRO_0000029998" description="S-adenosylmethionine decarboxylase alpha chain">
    <location>
        <begin position="71"/>
        <end position="357"/>
    </location>
</feature>
<feature type="active site" evidence="1">
    <location>
        <position position="11"/>
    </location>
</feature>
<feature type="active site" evidence="1">
    <location>
        <position position="14"/>
    </location>
</feature>
<feature type="active site" description="Schiff-base intermediate with substrate; via pyruvic acid" evidence="1">
    <location>
        <position position="71"/>
    </location>
</feature>
<feature type="active site" description="Proton donor; for catalytic activity" evidence="1">
    <location>
        <position position="85"/>
    </location>
</feature>
<feature type="active site" description="Proton acceptor; for processing activity" evidence="1">
    <location>
        <position position="234"/>
    </location>
</feature>
<feature type="active site" description="Proton acceptor; for processing activity" evidence="1">
    <location>
        <position position="247"/>
    </location>
</feature>
<feature type="site" description="Cleavage (non-hydrolytic); by autolysis">
    <location>
        <begin position="70"/>
        <end position="71"/>
    </location>
</feature>
<feature type="modified residue" description="Pyruvic acid (Ser); by autocatalysis" evidence="2">
    <location>
        <position position="71"/>
    </location>
</feature>
<feature type="mutagenesis site" description="Loss of activity." evidence="2">
    <original>S</original>
    <variation>A</variation>
    <location>
        <position position="71"/>
    </location>
</feature>
<reference key="1">
    <citation type="journal article" date="1995" name="Eur. J. Biochem.">
        <title>cDNAs for S-adenosyl-L-methionine decarboxylase from Catharanthus roseus, heterologous expression, identification of the proenzyme-processing site, evidence for the presence of both subunits in the active enzyme, and a conserved region in the 5' mRNA leader.</title>
        <authorList>
            <person name="Schroeder G."/>
            <person name="Schroeder J."/>
        </authorList>
    </citation>
    <scope>NUCLEOTIDE SEQUENCE [MRNA]</scope>
    <scope>PYRUVATE FORMATION AT SER-71</scope>
    <scope>MUTAGENESIS OF SER-71</scope>
</reference>
<name>DCAM_CATRO</name>
<dbReference type="EC" id="4.1.1.50"/>
<dbReference type="EMBL" id="U12573">
    <property type="protein sequence ID" value="AAC48989.1"/>
    <property type="molecule type" value="mRNA"/>
</dbReference>
<dbReference type="PIR" id="S68990">
    <property type="entry name" value="S68990"/>
</dbReference>
<dbReference type="SMR" id="Q42679"/>
<dbReference type="OrthoDB" id="1068353at2759"/>
<dbReference type="SABIO-RK" id="Q42679"/>
<dbReference type="UniPathway" id="UPA00331">
    <property type="reaction ID" value="UER00451"/>
</dbReference>
<dbReference type="GO" id="GO:0005829">
    <property type="term" value="C:cytosol"/>
    <property type="evidence" value="ECO:0007669"/>
    <property type="project" value="TreeGrafter"/>
</dbReference>
<dbReference type="GO" id="GO:0004014">
    <property type="term" value="F:adenosylmethionine decarboxylase activity"/>
    <property type="evidence" value="ECO:0007669"/>
    <property type="project" value="UniProtKB-EC"/>
</dbReference>
<dbReference type="GO" id="GO:0008295">
    <property type="term" value="P:spermidine biosynthetic process"/>
    <property type="evidence" value="ECO:0007669"/>
    <property type="project" value="UniProtKB-KW"/>
</dbReference>
<dbReference type="GO" id="GO:0006597">
    <property type="term" value="P:spermine biosynthetic process"/>
    <property type="evidence" value="ECO:0007669"/>
    <property type="project" value="InterPro"/>
</dbReference>
<dbReference type="FunFam" id="3.30.360.50:FF:000001">
    <property type="entry name" value="S-adenosylmethionine decarboxylase proenzyme"/>
    <property type="match status" value="1"/>
</dbReference>
<dbReference type="FunFam" id="3.60.90.10:FF:000002">
    <property type="entry name" value="S-adenosylmethionine decarboxylase proenzyme"/>
    <property type="match status" value="1"/>
</dbReference>
<dbReference type="Gene3D" id="3.30.360.50">
    <property type="entry name" value="S-adenosylmethionine decarboxylase"/>
    <property type="match status" value="1"/>
</dbReference>
<dbReference type="Gene3D" id="3.60.90.10">
    <property type="entry name" value="S-adenosylmethionine decarboxylase"/>
    <property type="match status" value="1"/>
</dbReference>
<dbReference type="InterPro" id="IPR048283">
    <property type="entry name" value="AdoMetDC-like"/>
</dbReference>
<dbReference type="InterPro" id="IPR001985">
    <property type="entry name" value="S-AdoMet_decarboxylase_euk"/>
</dbReference>
<dbReference type="InterPro" id="IPR016067">
    <property type="entry name" value="S-AdoMet_deCO2ase_core"/>
</dbReference>
<dbReference type="InterPro" id="IPR018166">
    <property type="entry name" value="S-AdoMet_deCO2ase_CS"/>
</dbReference>
<dbReference type="NCBIfam" id="TIGR00535">
    <property type="entry name" value="SAM_DCase"/>
    <property type="match status" value="1"/>
</dbReference>
<dbReference type="PANTHER" id="PTHR11570">
    <property type="entry name" value="S-ADENOSYLMETHIONINE DECARBOXYLASE"/>
    <property type="match status" value="1"/>
</dbReference>
<dbReference type="PANTHER" id="PTHR11570:SF15">
    <property type="entry name" value="S-ADENOSYLMETHIONINE DECARBOXYLASE PROENZYME 3"/>
    <property type="match status" value="1"/>
</dbReference>
<dbReference type="Pfam" id="PF01536">
    <property type="entry name" value="SAM_decarbox"/>
    <property type="match status" value="1"/>
</dbReference>
<dbReference type="PIRSF" id="PIRSF001355">
    <property type="entry name" value="S-AdenosylMet_decarboxylase"/>
    <property type="match status" value="1"/>
</dbReference>
<dbReference type="SUPFAM" id="SSF56276">
    <property type="entry name" value="S-adenosylmethionine decarboxylase"/>
    <property type="match status" value="1"/>
</dbReference>
<dbReference type="PROSITE" id="PS01336">
    <property type="entry name" value="ADOMETDC"/>
    <property type="match status" value="1"/>
</dbReference>
<keyword id="KW-0068">Autocatalytic cleavage</keyword>
<keyword id="KW-0210">Decarboxylase</keyword>
<keyword id="KW-0456">Lyase</keyword>
<keyword id="KW-0620">Polyamine biosynthesis</keyword>
<keyword id="KW-0670">Pyruvate</keyword>
<keyword id="KW-0949">S-adenosyl-L-methionine</keyword>
<keyword id="KW-0704">Schiff base</keyword>
<keyword id="KW-0745">Spermidine biosynthesis</keyword>
<keyword id="KW-0865">Zymogen</keyword>